<gene>
    <name evidence="1" type="primary">bioB</name>
    <name type="ordered locus">CD630_02970</name>
</gene>
<keyword id="KW-0001">2Fe-2S</keyword>
<keyword id="KW-0004">4Fe-4S</keyword>
<keyword id="KW-0093">Biotin biosynthesis</keyword>
<keyword id="KW-0408">Iron</keyword>
<keyword id="KW-0411">Iron-sulfur</keyword>
<keyword id="KW-0479">Metal-binding</keyword>
<keyword id="KW-1185">Reference proteome</keyword>
<keyword id="KW-0949">S-adenosyl-L-methionine</keyword>
<keyword id="KW-0808">Transferase</keyword>
<organism>
    <name type="scientific">Clostridioides difficile (strain 630)</name>
    <name type="common">Peptoclostridium difficile</name>
    <dbReference type="NCBI Taxonomy" id="272563"/>
    <lineage>
        <taxon>Bacteria</taxon>
        <taxon>Bacillati</taxon>
        <taxon>Bacillota</taxon>
        <taxon>Clostridia</taxon>
        <taxon>Peptostreptococcales</taxon>
        <taxon>Peptostreptococcaceae</taxon>
        <taxon>Clostridioides</taxon>
    </lineage>
</organism>
<accession>Q18D35</accession>
<feature type="chain" id="PRO_0000381317" description="Biotin synthase">
    <location>
        <begin position="1"/>
        <end position="325"/>
    </location>
</feature>
<feature type="domain" description="Radical SAM core" evidence="2">
    <location>
        <begin position="51"/>
        <end position="280"/>
    </location>
</feature>
<feature type="binding site" evidence="1">
    <location>
        <position position="69"/>
    </location>
    <ligand>
        <name>[4Fe-4S] cluster</name>
        <dbReference type="ChEBI" id="CHEBI:49883"/>
        <note>4Fe-4S-S-AdoMet</note>
    </ligand>
</feature>
<feature type="binding site" evidence="1">
    <location>
        <position position="73"/>
    </location>
    <ligand>
        <name>[4Fe-4S] cluster</name>
        <dbReference type="ChEBI" id="CHEBI:49883"/>
        <note>4Fe-4S-S-AdoMet</note>
    </ligand>
</feature>
<feature type="binding site" evidence="1">
    <location>
        <position position="76"/>
    </location>
    <ligand>
        <name>[4Fe-4S] cluster</name>
        <dbReference type="ChEBI" id="CHEBI:49883"/>
        <note>4Fe-4S-S-AdoMet</note>
    </ligand>
</feature>
<feature type="binding site" evidence="1">
    <location>
        <position position="113"/>
    </location>
    <ligand>
        <name>[2Fe-2S] cluster</name>
        <dbReference type="ChEBI" id="CHEBI:190135"/>
    </ligand>
</feature>
<feature type="binding site" evidence="1">
    <location>
        <position position="145"/>
    </location>
    <ligand>
        <name>[2Fe-2S] cluster</name>
        <dbReference type="ChEBI" id="CHEBI:190135"/>
    </ligand>
</feature>
<feature type="binding site" evidence="1">
    <location>
        <position position="205"/>
    </location>
    <ligand>
        <name>[2Fe-2S] cluster</name>
        <dbReference type="ChEBI" id="CHEBI:190135"/>
    </ligand>
</feature>
<feature type="binding site" evidence="1">
    <location>
        <position position="275"/>
    </location>
    <ligand>
        <name>[2Fe-2S] cluster</name>
        <dbReference type="ChEBI" id="CHEBI:190135"/>
    </ligand>
</feature>
<proteinExistence type="inferred from homology"/>
<comment type="function">
    <text evidence="1">Catalyzes the conversion of dethiobiotin (DTB) to biotin by the insertion of a sulfur atom into dethiobiotin via a radical-based mechanism.</text>
</comment>
<comment type="catalytic activity">
    <reaction evidence="1">
        <text>(4R,5S)-dethiobiotin + (sulfur carrier)-SH + 2 reduced [2Fe-2S]-[ferredoxin] + 2 S-adenosyl-L-methionine = (sulfur carrier)-H + biotin + 2 5'-deoxyadenosine + 2 L-methionine + 2 oxidized [2Fe-2S]-[ferredoxin]</text>
        <dbReference type="Rhea" id="RHEA:22060"/>
        <dbReference type="Rhea" id="RHEA-COMP:10000"/>
        <dbReference type="Rhea" id="RHEA-COMP:10001"/>
        <dbReference type="Rhea" id="RHEA-COMP:14737"/>
        <dbReference type="Rhea" id="RHEA-COMP:14739"/>
        <dbReference type="ChEBI" id="CHEBI:17319"/>
        <dbReference type="ChEBI" id="CHEBI:29917"/>
        <dbReference type="ChEBI" id="CHEBI:33737"/>
        <dbReference type="ChEBI" id="CHEBI:33738"/>
        <dbReference type="ChEBI" id="CHEBI:57586"/>
        <dbReference type="ChEBI" id="CHEBI:57844"/>
        <dbReference type="ChEBI" id="CHEBI:59789"/>
        <dbReference type="ChEBI" id="CHEBI:64428"/>
        <dbReference type="ChEBI" id="CHEBI:149473"/>
        <dbReference type="EC" id="2.8.1.6"/>
    </reaction>
</comment>
<comment type="cofactor">
    <cofactor evidence="1">
        <name>[4Fe-4S] cluster</name>
        <dbReference type="ChEBI" id="CHEBI:49883"/>
    </cofactor>
    <text evidence="1">Binds 1 [4Fe-4S] cluster. The cluster is coordinated with 3 cysteines and an exchangeable S-adenosyl-L-methionine.</text>
</comment>
<comment type="cofactor">
    <cofactor evidence="1">
        <name>[2Fe-2S] cluster</name>
        <dbReference type="ChEBI" id="CHEBI:190135"/>
    </cofactor>
    <text evidence="1">Binds 1 [2Fe-2S] cluster. The cluster is coordinated with 3 cysteines and 1 arginine.</text>
</comment>
<comment type="pathway">
    <text evidence="1">Cofactor biosynthesis; biotin biosynthesis; biotin from 7,8-diaminononanoate: step 2/2.</text>
</comment>
<comment type="subunit">
    <text evidence="1">Homodimer.</text>
</comment>
<comment type="similarity">
    <text evidence="1">Belongs to the radical SAM superfamily. Biotin synthase family.</text>
</comment>
<reference key="1">
    <citation type="journal article" date="2006" name="Nat. Genet.">
        <title>The multidrug-resistant human pathogen Clostridium difficile has a highly mobile, mosaic genome.</title>
        <authorList>
            <person name="Sebaihia M."/>
            <person name="Wren B.W."/>
            <person name="Mullany P."/>
            <person name="Fairweather N.F."/>
            <person name="Minton N."/>
            <person name="Stabler R."/>
            <person name="Thomson N.R."/>
            <person name="Roberts A.P."/>
            <person name="Cerdeno-Tarraga A.M."/>
            <person name="Wang H."/>
            <person name="Holden M.T.G."/>
            <person name="Wright A."/>
            <person name="Churcher C."/>
            <person name="Quail M.A."/>
            <person name="Baker S."/>
            <person name="Bason N."/>
            <person name="Brooks K."/>
            <person name="Chillingworth T."/>
            <person name="Cronin A."/>
            <person name="Davis P."/>
            <person name="Dowd L."/>
            <person name="Fraser A."/>
            <person name="Feltwell T."/>
            <person name="Hance Z."/>
            <person name="Holroyd S."/>
            <person name="Jagels K."/>
            <person name="Moule S."/>
            <person name="Mungall K."/>
            <person name="Price C."/>
            <person name="Rabbinowitsch E."/>
            <person name="Sharp S."/>
            <person name="Simmonds M."/>
            <person name="Stevens K."/>
            <person name="Unwin L."/>
            <person name="Whithead S."/>
            <person name="Dupuy B."/>
            <person name="Dougan G."/>
            <person name="Barrell B."/>
            <person name="Parkhill J."/>
        </authorList>
    </citation>
    <scope>NUCLEOTIDE SEQUENCE [LARGE SCALE GENOMIC DNA]</scope>
    <source>
        <strain>630</strain>
    </source>
</reference>
<dbReference type="EC" id="2.8.1.6" evidence="1"/>
<dbReference type="EMBL" id="AM180355">
    <property type="protein sequence ID" value="CAJ67119.1"/>
    <property type="molecule type" value="Genomic_DNA"/>
</dbReference>
<dbReference type="RefSeq" id="WP_009895370.1">
    <property type="nucleotide sequence ID" value="NZ_JAUPES010000004.1"/>
</dbReference>
<dbReference type="RefSeq" id="YP_001086766.1">
    <property type="nucleotide sequence ID" value="NC_009089.1"/>
</dbReference>
<dbReference type="SMR" id="Q18D35"/>
<dbReference type="STRING" id="272563.CD630_02970"/>
<dbReference type="EnsemblBacteria" id="CAJ67119">
    <property type="protein sequence ID" value="CAJ67119"/>
    <property type="gene ID" value="CD630_02970"/>
</dbReference>
<dbReference type="KEGG" id="cdf:CD630_02970"/>
<dbReference type="KEGG" id="pdc:CDIF630_00422"/>
<dbReference type="PATRIC" id="fig|272563.120.peg.316"/>
<dbReference type="eggNOG" id="COG0502">
    <property type="taxonomic scope" value="Bacteria"/>
</dbReference>
<dbReference type="OrthoDB" id="9786826at2"/>
<dbReference type="PhylomeDB" id="Q18D35"/>
<dbReference type="BioCyc" id="PDIF272563:G12WB-403-MONOMER"/>
<dbReference type="UniPathway" id="UPA00078">
    <property type="reaction ID" value="UER00162"/>
</dbReference>
<dbReference type="Proteomes" id="UP000001978">
    <property type="component" value="Chromosome"/>
</dbReference>
<dbReference type="GO" id="GO:0051537">
    <property type="term" value="F:2 iron, 2 sulfur cluster binding"/>
    <property type="evidence" value="ECO:0007669"/>
    <property type="project" value="UniProtKB-KW"/>
</dbReference>
<dbReference type="GO" id="GO:0051539">
    <property type="term" value="F:4 iron, 4 sulfur cluster binding"/>
    <property type="evidence" value="ECO:0007669"/>
    <property type="project" value="UniProtKB-KW"/>
</dbReference>
<dbReference type="GO" id="GO:0004076">
    <property type="term" value="F:biotin synthase activity"/>
    <property type="evidence" value="ECO:0007669"/>
    <property type="project" value="UniProtKB-UniRule"/>
</dbReference>
<dbReference type="GO" id="GO:0005506">
    <property type="term" value="F:iron ion binding"/>
    <property type="evidence" value="ECO:0007669"/>
    <property type="project" value="UniProtKB-UniRule"/>
</dbReference>
<dbReference type="GO" id="GO:0009102">
    <property type="term" value="P:biotin biosynthetic process"/>
    <property type="evidence" value="ECO:0007669"/>
    <property type="project" value="UniProtKB-UniRule"/>
</dbReference>
<dbReference type="CDD" id="cd01335">
    <property type="entry name" value="Radical_SAM"/>
    <property type="match status" value="1"/>
</dbReference>
<dbReference type="FunFam" id="3.20.20.70:FF:000026">
    <property type="entry name" value="Biotin synthase"/>
    <property type="match status" value="1"/>
</dbReference>
<dbReference type="Gene3D" id="3.20.20.70">
    <property type="entry name" value="Aldolase class I"/>
    <property type="match status" value="1"/>
</dbReference>
<dbReference type="HAMAP" id="MF_01694">
    <property type="entry name" value="BioB"/>
    <property type="match status" value="1"/>
</dbReference>
<dbReference type="InterPro" id="IPR013785">
    <property type="entry name" value="Aldolase_TIM"/>
</dbReference>
<dbReference type="InterPro" id="IPR010722">
    <property type="entry name" value="BATS_dom"/>
</dbReference>
<dbReference type="InterPro" id="IPR002684">
    <property type="entry name" value="Biotin_synth/BioAB"/>
</dbReference>
<dbReference type="InterPro" id="IPR024177">
    <property type="entry name" value="Biotin_synthase"/>
</dbReference>
<dbReference type="InterPro" id="IPR006638">
    <property type="entry name" value="Elp3/MiaA/NifB-like_rSAM"/>
</dbReference>
<dbReference type="InterPro" id="IPR007197">
    <property type="entry name" value="rSAM"/>
</dbReference>
<dbReference type="NCBIfam" id="TIGR00433">
    <property type="entry name" value="bioB"/>
    <property type="match status" value="1"/>
</dbReference>
<dbReference type="PANTHER" id="PTHR22976">
    <property type="entry name" value="BIOTIN SYNTHASE"/>
    <property type="match status" value="1"/>
</dbReference>
<dbReference type="PANTHER" id="PTHR22976:SF2">
    <property type="entry name" value="BIOTIN SYNTHASE, MITOCHONDRIAL"/>
    <property type="match status" value="1"/>
</dbReference>
<dbReference type="Pfam" id="PF06968">
    <property type="entry name" value="BATS"/>
    <property type="match status" value="1"/>
</dbReference>
<dbReference type="Pfam" id="PF04055">
    <property type="entry name" value="Radical_SAM"/>
    <property type="match status" value="1"/>
</dbReference>
<dbReference type="PIRSF" id="PIRSF001619">
    <property type="entry name" value="Biotin_synth"/>
    <property type="match status" value="1"/>
</dbReference>
<dbReference type="SFLD" id="SFLDG01060">
    <property type="entry name" value="BATS_domain_containing"/>
    <property type="match status" value="1"/>
</dbReference>
<dbReference type="SFLD" id="SFLDG01278">
    <property type="entry name" value="biotin_synthase_like"/>
    <property type="match status" value="1"/>
</dbReference>
<dbReference type="SMART" id="SM00876">
    <property type="entry name" value="BATS"/>
    <property type="match status" value="1"/>
</dbReference>
<dbReference type="SMART" id="SM00729">
    <property type="entry name" value="Elp3"/>
    <property type="match status" value="1"/>
</dbReference>
<dbReference type="SUPFAM" id="SSF102114">
    <property type="entry name" value="Radical SAM enzymes"/>
    <property type="match status" value="1"/>
</dbReference>
<dbReference type="PROSITE" id="PS51918">
    <property type="entry name" value="RADICAL_SAM"/>
    <property type="match status" value="1"/>
</dbReference>
<sequence length="325" mass="36875">MEKYIIKLKNKVLREKEISYEEALNLISLDTNNKNDFDILLKSANEIREYFMGRKADLCTIMNAKSGKCSEDCKFCAQSSYYKTGVEEYSLLDYNEILNRAKEMESKGVHRFSLVTSGKGMSGKEFNNILNIYEGLRENTNLKLCASLGIIDYEQAKMLKSAGVTTYHHNVETCRDNFHNICTTHTYKDRIKTIKDAKKAGLDVCVGGIIGMNESEEQRLKMAFEIRELNVKSFPINILNPIKNTPMENYDVLEPMEILKTTAVFRFIIPNVYIRYAGGRLSLKGYDKVGFNGGVNSAIVGDYLTTVGSGIENDKKMIIEQGFEL</sequence>
<name>BIOB_CLOD6</name>
<evidence type="ECO:0000255" key="1">
    <source>
        <dbReference type="HAMAP-Rule" id="MF_01694"/>
    </source>
</evidence>
<evidence type="ECO:0000255" key="2">
    <source>
        <dbReference type="PROSITE-ProRule" id="PRU01266"/>
    </source>
</evidence>
<protein>
    <recommendedName>
        <fullName evidence="1">Biotin synthase</fullName>
        <ecNumber evidence="1">2.8.1.6</ecNumber>
    </recommendedName>
</protein>